<name>MSHR_MACNE</name>
<comment type="function">
    <text evidence="1">Receptor for MSH (alpha, beta and gamma) and ACTH. The activity of this receptor is mediated by G proteins which activate adenylate cyclase. Mediates melanogenesis, the production of eumelanin (black/brown) and phaeomelanin (red/yellow), via regulation of cAMP signaling in melanocytes.</text>
</comment>
<comment type="subunit">
    <text evidence="1">Interacts with MGRN1, but does not undergo MGRN1-mediated ubiquitination; this interaction competes with GNAS-binding and thus inhibits agonist-induced cAMP production. Interacts with OPN3; the interaction results in a decrease in MC1R-mediated cAMP signaling and ultimately a decrease in melanin production in melanocytes.</text>
</comment>
<comment type="subcellular location">
    <subcellularLocation>
        <location evidence="1">Cell membrane</location>
        <topology evidence="2">Multi-pass membrane protein</topology>
    </subcellularLocation>
</comment>
<comment type="similarity">
    <text evidence="3">Belongs to the G-protein coupled receptor 1 family.</text>
</comment>
<proteinExistence type="inferred from homology"/>
<organism>
    <name type="scientific">Macaca nemestrina</name>
    <name type="common">Pig-tailed macaque</name>
    <dbReference type="NCBI Taxonomy" id="9545"/>
    <lineage>
        <taxon>Eukaryota</taxon>
        <taxon>Metazoa</taxon>
        <taxon>Chordata</taxon>
        <taxon>Craniata</taxon>
        <taxon>Vertebrata</taxon>
        <taxon>Euteleostomi</taxon>
        <taxon>Mammalia</taxon>
        <taxon>Eutheria</taxon>
        <taxon>Euarchontoglires</taxon>
        <taxon>Primates</taxon>
        <taxon>Haplorrhini</taxon>
        <taxon>Catarrhini</taxon>
        <taxon>Cercopithecidae</taxon>
        <taxon>Cercopithecinae</taxon>
        <taxon>Macaca</taxon>
    </lineage>
</organism>
<reference key="1">
    <citation type="journal article" date="2003" name="Am. J. Phys. Anthropol.">
        <title>Evolution of a pigmentation gene, the melanocortin-1 receptor, in primates.</title>
        <authorList>
            <person name="Mundy N.I."/>
            <person name="Kelly J."/>
        </authorList>
    </citation>
    <scope>NUCLEOTIDE SEQUENCE [GENOMIC DNA]</scope>
    <source>
        <strain>Isolate 1</strain>
    </source>
</reference>
<keyword id="KW-1003">Cell membrane</keyword>
<keyword id="KW-0297">G-protein coupled receptor</keyword>
<keyword id="KW-0325">Glycoprotein</keyword>
<keyword id="KW-0449">Lipoprotein</keyword>
<keyword id="KW-0472">Membrane</keyword>
<keyword id="KW-0564">Palmitate</keyword>
<keyword id="KW-0675">Receptor</keyword>
<keyword id="KW-1185">Reference proteome</keyword>
<keyword id="KW-0807">Transducer</keyword>
<keyword id="KW-0812">Transmembrane</keyword>
<keyword id="KW-1133">Transmembrane helix</keyword>
<sequence length="317" mass="34783">MPVQGSQRRLLGSLNSTPTATPHLGLAANQTGARCLEMSIPDGLFLSLGLVSLVENVLVVTAIAKNRNLHSPMYCFICCLALSDLLVSGSNMLETAVTLLLEAGALAARAAVVQQLDNVIDVITCSSMLSSLCFLGAIAVDRYISIFYALRYHSIVTLPRARRAIAAIWVASVLCSTLFIAYYDHAAVLLCLVVFFLAMLVLMAVLYVHMLARACQHAQGIARLHKRQRLAHQGFGLKGAATLTILLGIFFLCWGPFFLHLTLIVLCPQHPTCSCIFKNFNLFLTLIICNAIIDPLIYAFRSQELRRTLKEVLLCSW</sequence>
<dbReference type="EMBL" id="AY205099">
    <property type="protein sequence ID" value="AAP30973.1"/>
    <property type="molecule type" value="Genomic_DNA"/>
</dbReference>
<dbReference type="SMR" id="Q864J8"/>
<dbReference type="STRING" id="9545.ENSMNEP00000004829"/>
<dbReference type="GlyCosmos" id="Q864J8">
    <property type="glycosylation" value="1 site, No reported glycans"/>
</dbReference>
<dbReference type="Proteomes" id="UP000233120">
    <property type="component" value="Unassembled WGS sequence"/>
</dbReference>
<dbReference type="GO" id="GO:0005886">
    <property type="term" value="C:plasma membrane"/>
    <property type="evidence" value="ECO:0000250"/>
    <property type="project" value="UniProtKB"/>
</dbReference>
<dbReference type="GO" id="GO:0004980">
    <property type="term" value="F:melanocyte-stimulating hormone receptor activity"/>
    <property type="evidence" value="ECO:0007669"/>
    <property type="project" value="InterPro"/>
</dbReference>
<dbReference type="GO" id="GO:0007189">
    <property type="term" value="P:adenylate cyclase-activating G protein-coupled receptor signaling pathway"/>
    <property type="evidence" value="ECO:0007669"/>
    <property type="project" value="UniProtKB-ARBA"/>
</dbReference>
<dbReference type="CDD" id="cd15351">
    <property type="entry name" value="7tmA_MC1R"/>
    <property type="match status" value="1"/>
</dbReference>
<dbReference type="FunFam" id="1.20.1070.10:FF:000211">
    <property type="entry name" value="Melanocyte-stimulating hormone receptor"/>
    <property type="match status" value="1"/>
</dbReference>
<dbReference type="Gene3D" id="1.20.1070.10">
    <property type="entry name" value="Rhodopsin 7-helix transmembrane proteins"/>
    <property type="match status" value="1"/>
</dbReference>
<dbReference type="InterPro" id="IPR000276">
    <property type="entry name" value="GPCR_Rhodpsn"/>
</dbReference>
<dbReference type="InterPro" id="IPR017452">
    <property type="entry name" value="GPCR_Rhodpsn_7TM"/>
</dbReference>
<dbReference type="InterPro" id="IPR001671">
    <property type="entry name" value="Melcrt_ACTH_rcpt"/>
</dbReference>
<dbReference type="InterPro" id="IPR000761">
    <property type="entry name" value="MSH_rcpt"/>
</dbReference>
<dbReference type="PANTHER" id="PTHR22750">
    <property type="entry name" value="G-PROTEIN COUPLED RECEPTOR"/>
    <property type="match status" value="1"/>
</dbReference>
<dbReference type="Pfam" id="PF00001">
    <property type="entry name" value="7tm_1"/>
    <property type="match status" value="2"/>
</dbReference>
<dbReference type="PRINTS" id="PR00237">
    <property type="entry name" value="GPCRRHODOPSN"/>
</dbReference>
<dbReference type="PRINTS" id="PR00534">
    <property type="entry name" value="MCRFAMILY"/>
</dbReference>
<dbReference type="PRINTS" id="PR00536">
    <property type="entry name" value="MELNOCYTESHR"/>
</dbReference>
<dbReference type="SMART" id="SM01381">
    <property type="entry name" value="7TM_GPCR_Srsx"/>
    <property type="match status" value="1"/>
</dbReference>
<dbReference type="SUPFAM" id="SSF81321">
    <property type="entry name" value="Family A G protein-coupled receptor-like"/>
    <property type="match status" value="1"/>
</dbReference>
<dbReference type="PROSITE" id="PS00237">
    <property type="entry name" value="G_PROTEIN_RECEP_F1_1"/>
    <property type="match status" value="1"/>
</dbReference>
<dbReference type="PROSITE" id="PS50262">
    <property type="entry name" value="G_PROTEIN_RECEP_F1_2"/>
    <property type="match status" value="1"/>
</dbReference>
<gene>
    <name type="primary">MC1R</name>
</gene>
<accession>Q864J8</accession>
<protein>
    <recommendedName>
        <fullName>Melanocyte-stimulating hormone receptor</fullName>
        <shortName>MSH-R</shortName>
    </recommendedName>
    <alternativeName>
        <fullName>Melanocortin receptor 1</fullName>
        <shortName>MC1-R</shortName>
    </alternativeName>
</protein>
<evidence type="ECO:0000250" key="1">
    <source>
        <dbReference type="UniProtKB" id="Q01726"/>
    </source>
</evidence>
<evidence type="ECO:0000255" key="2"/>
<evidence type="ECO:0000255" key="3">
    <source>
        <dbReference type="PROSITE-ProRule" id="PRU00521"/>
    </source>
</evidence>
<feature type="chain" id="PRO_0000069828" description="Melanocyte-stimulating hormone receptor">
    <location>
        <begin position="1"/>
        <end position="317"/>
    </location>
</feature>
<feature type="topological domain" description="Extracellular" evidence="2">
    <location>
        <begin position="1"/>
        <end position="37"/>
    </location>
</feature>
<feature type="transmembrane region" description="Helical; Name=1" evidence="2">
    <location>
        <begin position="38"/>
        <end position="63"/>
    </location>
</feature>
<feature type="topological domain" description="Cytoplasmic" evidence="2">
    <location>
        <begin position="64"/>
        <end position="72"/>
    </location>
</feature>
<feature type="transmembrane region" description="Helical; Name=2" evidence="2">
    <location>
        <begin position="73"/>
        <end position="93"/>
    </location>
</feature>
<feature type="topological domain" description="Extracellular" evidence="2">
    <location>
        <begin position="94"/>
        <end position="118"/>
    </location>
</feature>
<feature type="transmembrane region" description="Helical; Name=3" evidence="2">
    <location>
        <begin position="119"/>
        <end position="140"/>
    </location>
</feature>
<feature type="topological domain" description="Cytoplasmic" evidence="2">
    <location>
        <begin position="141"/>
        <end position="163"/>
    </location>
</feature>
<feature type="transmembrane region" description="Helical; Name=4" evidence="2">
    <location>
        <begin position="164"/>
        <end position="183"/>
    </location>
</feature>
<feature type="topological domain" description="Extracellular" evidence="2">
    <location>
        <begin position="184"/>
        <end position="191"/>
    </location>
</feature>
<feature type="transmembrane region" description="Helical; Name=5" evidence="2">
    <location>
        <begin position="192"/>
        <end position="211"/>
    </location>
</feature>
<feature type="topological domain" description="Cytoplasmic" evidence="2">
    <location>
        <begin position="212"/>
        <end position="240"/>
    </location>
</feature>
<feature type="transmembrane region" description="Helical; Name=6" evidence="2">
    <location>
        <begin position="241"/>
        <end position="266"/>
    </location>
</feature>
<feature type="topological domain" description="Extracellular" evidence="2">
    <location>
        <begin position="267"/>
        <end position="279"/>
    </location>
</feature>
<feature type="transmembrane region" description="Helical; Name=7" evidence="2">
    <location>
        <begin position="280"/>
        <end position="300"/>
    </location>
</feature>
<feature type="topological domain" description="Cytoplasmic" evidence="2">
    <location>
        <begin position="301"/>
        <end position="317"/>
    </location>
</feature>
<feature type="lipid moiety-binding region" description="S-palmitoyl cysteine" evidence="2">
    <location>
        <position position="315"/>
    </location>
</feature>
<feature type="glycosylation site" description="N-linked (GlcNAc...) asparagine" evidence="2">
    <location>
        <position position="29"/>
    </location>
</feature>